<organism>
    <name type="scientific">Halobacterium salinarum (strain ATCC 29341 / DSM 671 / R1)</name>
    <dbReference type="NCBI Taxonomy" id="478009"/>
    <lineage>
        <taxon>Archaea</taxon>
        <taxon>Methanobacteriati</taxon>
        <taxon>Methanobacteriota</taxon>
        <taxon>Stenosarchaea group</taxon>
        <taxon>Halobacteria</taxon>
        <taxon>Halobacteriales</taxon>
        <taxon>Halobacteriaceae</taxon>
        <taxon>Halobacterium</taxon>
        <taxon>Halobacterium salinarum NRC-34001</taxon>
    </lineage>
</organism>
<name>RL18_HALS3</name>
<proteinExistence type="inferred from homology"/>
<dbReference type="EMBL" id="AM774415">
    <property type="protein sequence ID" value="CAP14244.1"/>
    <property type="molecule type" value="Genomic_DNA"/>
</dbReference>
<dbReference type="RefSeq" id="WP_010903253.1">
    <property type="nucleotide sequence ID" value="NC_010364.1"/>
</dbReference>
<dbReference type="SMR" id="B0R675"/>
<dbReference type="EnsemblBacteria" id="CAP14244">
    <property type="protein sequence ID" value="CAP14244"/>
    <property type="gene ID" value="OE_3414F"/>
</dbReference>
<dbReference type="KEGG" id="hsl:OE_3414F"/>
<dbReference type="HOGENOM" id="CLU_056222_2_0_2"/>
<dbReference type="PhylomeDB" id="B0R675"/>
<dbReference type="Proteomes" id="UP000001321">
    <property type="component" value="Chromosome"/>
</dbReference>
<dbReference type="GO" id="GO:0022625">
    <property type="term" value="C:cytosolic large ribosomal subunit"/>
    <property type="evidence" value="ECO:0007669"/>
    <property type="project" value="TreeGrafter"/>
</dbReference>
<dbReference type="GO" id="GO:0008097">
    <property type="term" value="F:5S rRNA binding"/>
    <property type="evidence" value="ECO:0007669"/>
    <property type="project" value="InterPro"/>
</dbReference>
<dbReference type="GO" id="GO:0003735">
    <property type="term" value="F:structural constituent of ribosome"/>
    <property type="evidence" value="ECO:0007669"/>
    <property type="project" value="InterPro"/>
</dbReference>
<dbReference type="GO" id="GO:0000027">
    <property type="term" value="P:ribosomal large subunit assembly"/>
    <property type="evidence" value="ECO:0007669"/>
    <property type="project" value="TreeGrafter"/>
</dbReference>
<dbReference type="GO" id="GO:0006412">
    <property type="term" value="P:translation"/>
    <property type="evidence" value="ECO:0007669"/>
    <property type="project" value="UniProtKB-UniRule"/>
</dbReference>
<dbReference type="CDD" id="cd00432">
    <property type="entry name" value="Ribosomal_L18_L5e"/>
    <property type="match status" value="1"/>
</dbReference>
<dbReference type="FunFam" id="3.30.420.100:FF:000008">
    <property type="entry name" value="50S ribosomal protein L18"/>
    <property type="match status" value="1"/>
</dbReference>
<dbReference type="Gene3D" id="3.30.420.100">
    <property type="match status" value="1"/>
</dbReference>
<dbReference type="HAMAP" id="MF_01337_A">
    <property type="entry name" value="Ribosomal_uL18_A"/>
    <property type="match status" value="1"/>
</dbReference>
<dbReference type="InterPro" id="IPR005485">
    <property type="entry name" value="Rbsml_uL18_euk"/>
</dbReference>
<dbReference type="NCBIfam" id="NF006342">
    <property type="entry name" value="PRK08569.1"/>
    <property type="match status" value="1"/>
</dbReference>
<dbReference type="PANTHER" id="PTHR23410:SF12">
    <property type="entry name" value="LARGE RIBOSOMAL SUBUNIT PROTEIN UL18"/>
    <property type="match status" value="1"/>
</dbReference>
<dbReference type="PANTHER" id="PTHR23410">
    <property type="entry name" value="RIBOSOMAL PROTEIN L5-RELATED"/>
    <property type="match status" value="1"/>
</dbReference>
<dbReference type="Pfam" id="PF17144">
    <property type="entry name" value="Ribosomal_L5e"/>
    <property type="match status" value="2"/>
</dbReference>
<dbReference type="PRINTS" id="PR00058">
    <property type="entry name" value="RIBOSOMALL5"/>
</dbReference>
<dbReference type="SUPFAM" id="SSF53137">
    <property type="entry name" value="Translational machinery components"/>
    <property type="match status" value="1"/>
</dbReference>
<feature type="chain" id="PRO_1000142672" description="Large ribosomal subunit protein uL18">
    <location>
        <begin position="1"/>
        <end position="183"/>
    </location>
</feature>
<comment type="function">
    <text evidence="1">This is one of the proteins that bind and probably mediate the attachment of the 5S RNA into the large ribosomal subunit, where it forms part of the central protuberance.</text>
</comment>
<comment type="subunit">
    <text evidence="1">Part of the 50S ribosomal subunit. Contacts the 5S and 23S rRNAs.</text>
</comment>
<comment type="similarity">
    <text evidence="1">Belongs to the universal ribosomal protein uL18 family.</text>
</comment>
<accession>B0R675</accession>
<keyword id="KW-0687">Ribonucleoprotein</keyword>
<keyword id="KW-0689">Ribosomal protein</keyword>
<keyword id="KW-0694">RNA-binding</keyword>
<keyword id="KW-0699">rRNA-binding</keyword>
<gene>
    <name evidence="1" type="primary">rpl18</name>
    <name type="ordered locus">OE_3414F</name>
</gene>
<reference key="1">
    <citation type="journal article" date="2008" name="Genomics">
        <title>Evolution in the laboratory: the genome of Halobacterium salinarum strain R1 compared to that of strain NRC-1.</title>
        <authorList>
            <person name="Pfeiffer F."/>
            <person name="Schuster S.C."/>
            <person name="Broicher A."/>
            <person name="Falb M."/>
            <person name="Palm P."/>
            <person name="Rodewald K."/>
            <person name="Ruepp A."/>
            <person name="Soppa J."/>
            <person name="Tittor J."/>
            <person name="Oesterhelt D."/>
        </authorList>
    </citation>
    <scope>NUCLEOTIDE SEQUENCE [LARGE SCALE GENOMIC DNA]</scope>
    <source>
        <strain>ATCC 29341 / DSM 671 / R1</strain>
    </source>
</reference>
<evidence type="ECO:0000255" key="1">
    <source>
        <dbReference type="HAMAP-Rule" id="MF_01337"/>
    </source>
</evidence>
<evidence type="ECO:0000305" key="2"/>
<sequence>MATGPRYKVPMRRRREVRTDYHQRLRLLKSGKPRLVARKSNKHVTAQLVTTGPDGDETVASAHSSDLDAYGWAAPTGNLPAAYLTGLLAGQRAVDAGVEEAVLDIGLNTATPGSKVFAIQEGAIDAGLDVPHNDSVLADWSRTRGEHIAEYAESLDEPLYSGDFDATALPAHFDETREAIMED</sequence>
<protein>
    <recommendedName>
        <fullName evidence="1">Large ribosomal subunit protein uL18</fullName>
    </recommendedName>
    <alternativeName>
        <fullName evidence="2">50S ribosomal protein L18</fullName>
    </alternativeName>
</protein>